<sequence length="379" mass="42576">MTNIRKTHPLTKIINDSFIDLPTPSNISAWWNFGSLLGICLILQILTGLFLAMHYTSDTTTAFSSVAHICRDVNYGWIIRYMHANGASMFFICLFLHVGRGLYYGSYMFPETWNIGIILLFTVMATAFMGYVLPWGQMSFWGATVITNLLSAIPYVGTNLVEWIWGGFSVDKATLTRFFAFHFILPFIVSALAAIHLLFLHETGSNNPSGIPSDSDKIPFHPYYTIKDILGILLLALTLMILVLFSPDLLGDPDNYTPANPLNTPPHIKPEWYFLFAYAILRSIPNKLGGVLALVLSILVLAVVPLLHTSKQRSMMFRPLSQCLFWLLVADLLTLTWIGGQPVEHPFIAIGQLASILYFTILLVLMPITSIVENHMLKW</sequence>
<geneLocation type="mitochondrion"/>
<evidence type="ECO:0000250" key="1"/>
<evidence type="ECO:0000250" key="2">
    <source>
        <dbReference type="UniProtKB" id="P00157"/>
    </source>
</evidence>
<evidence type="ECO:0000255" key="3">
    <source>
        <dbReference type="PROSITE-ProRule" id="PRU00967"/>
    </source>
</evidence>
<evidence type="ECO:0000255" key="4">
    <source>
        <dbReference type="PROSITE-ProRule" id="PRU00968"/>
    </source>
</evidence>
<proteinExistence type="inferred from homology"/>
<gene>
    <name type="primary">MT-CYB</name>
    <name type="synonym">COB</name>
    <name type="synonym">CYTB</name>
    <name type="synonym">MTCYB</name>
</gene>
<dbReference type="EMBL" id="AF498155">
    <property type="protein sequence ID" value="AAP19701.1"/>
    <property type="molecule type" value="Genomic_DNA"/>
</dbReference>
<dbReference type="SMR" id="Q85IN7"/>
<dbReference type="GO" id="GO:0005743">
    <property type="term" value="C:mitochondrial inner membrane"/>
    <property type="evidence" value="ECO:0007669"/>
    <property type="project" value="UniProtKB-SubCell"/>
</dbReference>
<dbReference type="GO" id="GO:0045275">
    <property type="term" value="C:respiratory chain complex III"/>
    <property type="evidence" value="ECO:0007669"/>
    <property type="project" value="InterPro"/>
</dbReference>
<dbReference type="GO" id="GO:0046872">
    <property type="term" value="F:metal ion binding"/>
    <property type="evidence" value="ECO:0007669"/>
    <property type="project" value="UniProtKB-KW"/>
</dbReference>
<dbReference type="GO" id="GO:0008121">
    <property type="term" value="F:ubiquinol-cytochrome-c reductase activity"/>
    <property type="evidence" value="ECO:0007669"/>
    <property type="project" value="InterPro"/>
</dbReference>
<dbReference type="GO" id="GO:0006122">
    <property type="term" value="P:mitochondrial electron transport, ubiquinol to cytochrome c"/>
    <property type="evidence" value="ECO:0007669"/>
    <property type="project" value="TreeGrafter"/>
</dbReference>
<dbReference type="CDD" id="cd00290">
    <property type="entry name" value="cytochrome_b_C"/>
    <property type="match status" value="1"/>
</dbReference>
<dbReference type="CDD" id="cd00284">
    <property type="entry name" value="Cytochrome_b_N"/>
    <property type="match status" value="1"/>
</dbReference>
<dbReference type="FunFam" id="1.20.810.10:FF:000002">
    <property type="entry name" value="Cytochrome b"/>
    <property type="match status" value="1"/>
</dbReference>
<dbReference type="Gene3D" id="1.20.810.10">
    <property type="entry name" value="Cytochrome Bc1 Complex, Chain C"/>
    <property type="match status" value="1"/>
</dbReference>
<dbReference type="InterPro" id="IPR005798">
    <property type="entry name" value="Cyt_b/b6_C"/>
</dbReference>
<dbReference type="InterPro" id="IPR036150">
    <property type="entry name" value="Cyt_b/b6_C_sf"/>
</dbReference>
<dbReference type="InterPro" id="IPR005797">
    <property type="entry name" value="Cyt_b/b6_N"/>
</dbReference>
<dbReference type="InterPro" id="IPR027387">
    <property type="entry name" value="Cytb/b6-like_sf"/>
</dbReference>
<dbReference type="InterPro" id="IPR030689">
    <property type="entry name" value="Cytochrome_b"/>
</dbReference>
<dbReference type="InterPro" id="IPR048260">
    <property type="entry name" value="Cytochrome_b_C_euk/bac"/>
</dbReference>
<dbReference type="InterPro" id="IPR048259">
    <property type="entry name" value="Cytochrome_b_N_euk/bac"/>
</dbReference>
<dbReference type="InterPro" id="IPR016174">
    <property type="entry name" value="Di-haem_cyt_TM"/>
</dbReference>
<dbReference type="PANTHER" id="PTHR19271">
    <property type="entry name" value="CYTOCHROME B"/>
    <property type="match status" value="1"/>
</dbReference>
<dbReference type="PANTHER" id="PTHR19271:SF16">
    <property type="entry name" value="CYTOCHROME B"/>
    <property type="match status" value="1"/>
</dbReference>
<dbReference type="Pfam" id="PF00032">
    <property type="entry name" value="Cytochrom_B_C"/>
    <property type="match status" value="1"/>
</dbReference>
<dbReference type="Pfam" id="PF00033">
    <property type="entry name" value="Cytochrome_B"/>
    <property type="match status" value="1"/>
</dbReference>
<dbReference type="PIRSF" id="PIRSF038885">
    <property type="entry name" value="COB"/>
    <property type="match status" value="1"/>
</dbReference>
<dbReference type="SUPFAM" id="SSF81648">
    <property type="entry name" value="a domain/subunit of cytochrome bc1 complex (Ubiquinol-cytochrome c reductase)"/>
    <property type="match status" value="1"/>
</dbReference>
<dbReference type="SUPFAM" id="SSF81342">
    <property type="entry name" value="Transmembrane di-heme cytochromes"/>
    <property type="match status" value="1"/>
</dbReference>
<dbReference type="PROSITE" id="PS51003">
    <property type="entry name" value="CYTB_CTER"/>
    <property type="match status" value="1"/>
</dbReference>
<dbReference type="PROSITE" id="PS51002">
    <property type="entry name" value="CYTB_NTER"/>
    <property type="match status" value="1"/>
</dbReference>
<protein>
    <recommendedName>
        <fullName>Cytochrome b</fullName>
    </recommendedName>
    <alternativeName>
        <fullName>Complex III subunit 3</fullName>
    </alternativeName>
    <alternativeName>
        <fullName>Complex III subunit III</fullName>
    </alternativeName>
    <alternativeName>
        <fullName>Cytochrome b-c1 complex subunit 3</fullName>
    </alternativeName>
    <alternativeName>
        <fullName>Ubiquinol-cytochrome-c reductase complex cytochrome b subunit</fullName>
    </alternativeName>
</protein>
<reference key="1">
    <citation type="journal article" date="2003" name="Syst. Biol.">
        <title>Type I STS markers are more informative than cytochrome B in phylogenetic reconstruction of the Mustelidae (Mammalia: Carnivora).</title>
        <authorList>
            <person name="Koepfli K.-P."/>
            <person name="Wayne R.K."/>
        </authorList>
    </citation>
    <scope>NUCLEOTIDE SEQUENCE [GENOMIC DNA]</scope>
</reference>
<name>CYB_GALVI</name>
<keyword id="KW-0249">Electron transport</keyword>
<keyword id="KW-0349">Heme</keyword>
<keyword id="KW-0408">Iron</keyword>
<keyword id="KW-0472">Membrane</keyword>
<keyword id="KW-0479">Metal-binding</keyword>
<keyword id="KW-0496">Mitochondrion</keyword>
<keyword id="KW-0999">Mitochondrion inner membrane</keyword>
<keyword id="KW-0679">Respiratory chain</keyword>
<keyword id="KW-0812">Transmembrane</keyword>
<keyword id="KW-1133">Transmembrane helix</keyword>
<keyword id="KW-0813">Transport</keyword>
<keyword id="KW-0830">Ubiquinone</keyword>
<accession>Q85IN7</accession>
<comment type="function">
    <text evidence="2">Component of the ubiquinol-cytochrome c reductase complex (complex III or cytochrome b-c1 complex) that is part of the mitochondrial respiratory chain. The b-c1 complex mediates electron transfer from ubiquinol to cytochrome c. Contributes to the generation of a proton gradient across the mitochondrial membrane that is then used for ATP synthesis.</text>
</comment>
<comment type="cofactor">
    <cofactor evidence="2">
        <name>heme b</name>
        <dbReference type="ChEBI" id="CHEBI:60344"/>
    </cofactor>
    <text evidence="2">Binds 2 heme b groups non-covalently.</text>
</comment>
<comment type="subunit">
    <text evidence="2">The cytochrome bc1 complex contains 11 subunits: 3 respiratory subunits (MT-CYB, CYC1 and UQCRFS1), 2 core proteins (UQCRC1 and UQCRC2) and 6 low-molecular weight proteins (UQCRH/QCR6, UQCRB/QCR7, UQCRQ/QCR8, UQCR10/QCR9, UQCR11/QCR10 and a cleavage product of UQCRFS1). This cytochrome bc1 complex then forms a dimer.</text>
</comment>
<comment type="subcellular location">
    <subcellularLocation>
        <location evidence="2">Mitochondrion inner membrane</location>
        <topology evidence="2">Multi-pass membrane protein</topology>
    </subcellularLocation>
</comment>
<comment type="miscellaneous">
    <text evidence="1">Heme 1 (or BL or b562) is low-potential and absorbs at about 562 nm, and heme 2 (or BH or b566) is high-potential and absorbs at about 566 nm.</text>
</comment>
<comment type="similarity">
    <text evidence="3 4">Belongs to the cytochrome b family.</text>
</comment>
<comment type="caution">
    <text evidence="2">The full-length protein contains only eight transmembrane helices, not nine as predicted by bioinformatics tools.</text>
</comment>
<feature type="chain" id="PRO_0000060992" description="Cytochrome b">
    <location>
        <begin position="1"/>
        <end position="379"/>
    </location>
</feature>
<feature type="transmembrane region" description="Helical" evidence="2">
    <location>
        <begin position="33"/>
        <end position="53"/>
    </location>
</feature>
<feature type="transmembrane region" description="Helical" evidence="2">
    <location>
        <begin position="77"/>
        <end position="98"/>
    </location>
</feature>
<feature type="transmembrane region" description="Helical" evidence="2">
    <location>
        <begin position="113"/>
        <end position="133"/>
    </location>
</feature>
<feature type="transmembrane region" description="Helical" evidence="2">
    <location>
        <begin position="178"/>
        <end position="198"/>
    </location>
</feature>
<feature type="transmembrane region" description="Helical" evidence="2">
    <location>
        <begin position="226"/>
        <end position="246"/>
    </location>
</feature>
<feature type="transmembrane region" description="Helical" evidence="2">
    <location>
        <begin position="288"/>
        <end position="308"/>
    </location>
</feature>
<feature type="transmembrane region" description="Helical" evidence="2">
    <location>
        <begin position="320"/>
        <end position="340"/>
    </location>
</feature>
<feature type="transmembrane region" description="Helical" evidence="2">
    <location>
        <begin position="347"/>
        <end position="367"/>
    </location>
</feature>
<feature type="binding site" description="axial binding residue" evidence="2">
    <location>
        <position position="83"/>
    </location>
    <ligand>
        <name>heme b</name>
        <dbReference type="ChEBI" id="CHEBI:60344"/>
        <label>b562</label>
    </ligand>
    <ligandPart>
        <name>Fe</name>
        <dbReference type="ChEBI" id="CHEBI:18248"/>
    </ligandPart>
</feature>
<feature type="binding site" description="axial binding residue" evidence="2">
    <location>
        <position position="97"/>
    </location>
    <ligand>
        <name>heme b</name>
        <dbReference type="ChEBI" id="CHEBI:60344"/>
        <label>b566</label>
    </ligand>
    <ligandPart>
        <name>Fe</name>
        <dbReference type="ChEBI" id="CHEBI:18248"/>
    </ligandPart>
</feature>
<feature type="binding site" description="axial binding residue" evidence="2">
    <location>
        <position position="182"/>
    </location>
    <ligand>
        <name>heme b</name>
        <dbReference type="ChEBI" id="CHEBI:60344"/>
        <label>b562</label>
    </ligand>
    <ligandPart>
        <name>Fe</name>
        <dbReference type="ChEBI" id="CHEBI:18248"/>
    </ligandPart>
</feature>
<feature type="binding site" description="axial binding residue" evidence="2">
    <location>
        <position position="196"/>
    </location>
    <ligand>
        <name>heme b</name>
        <dbReference type="ChEBI" id="CHEBI:60344"/>
        <label>b566</label>
    </ligand>
    <ligandPart>
        <name>Fe</name>
        <dbReference type="ChEBI" id="CHEBI:18248"/>
    </ligandPart>
</feature>
<feature type="binding site" evidence="2">
    <location>
        <position position="201"/>
    </location>
    <ligand>
        <name>a ubiquinone</name>
        <dbReference type="ChEBI" id="CHEBI:16389"/>
    </ligand>
</feature>
<organism>
    <name type="scientific">Galictis vittata</name>
    <name type="common">Grison</name>
    <dbReference type="NCBI Taxonomy" id="204265"/>
    <lineage>
        <taxon>Eukaryota</taxon>
        <taxon>Metazoa</taxon>
        <taxon>Chordata</taxon>
        <taxon>Craniata</taxon>
        <taxon>Vertebrata</taxon>
        <taxon>Euteleostomi</taxon>
        <taxon>Mammalia</taxon>
        <taxon>Eutheria</taxon>
        <taxon>Laurasiatheria</taxon>
        <taxon>Carnivora</taxon>
        <taxon>Caniformia</taxon>
        <taxon>Musteloidea</taxon>
        <taxon>Mustelidae</taxon>
        <taxon>Galictinae</taxon>
        <taxon>Galictis</taxon>
    </lineage>
</organism>